<name>MOAC_SALRD</name>
<reference key="1">
    <citation type="journal article" date="2005" name="Proc. Natl. Acad. Sci. U.S.A.">
        <title>The genome of Salinibacter ruber: convergence and gene exchange among hyperhalophilic bacteria and archaea.</title>
        <authorList>
            <person name="Mongodin E.F."/>
            <person name="Nelson K.E."/>
            <person name="Daugherty S."/>
            <person name="DeBoy R.T."/>
            <person name="Wister J."/>
            <person name="Khouri H."/>
            <person name="Weidman J."/>
            <person name="Walsh D.A."/>
            <person name="Papke R.T."/>
            <person name="Sanchez Perez G."/>
            <person name="Sharma A.K."/>
            <person name="Nesbo C.L."/>
            <person name="MacLeod D."/>
            <person name="Bapteste E."/>
            <person name="Doolittle W.F."/>
            <person name="Charlebois R.L."/>
            <person name="Legault B."/>
            <person name="Rodriguez-Valera F."/>
        </authorList>
    </citation>
    <scope>NUCLEOTIDE SEQUENCE [LARGE SCALE GENOMIC DNA]</scope>
    <source>
        <strain>DSM 13855 / CECT 5946 / M31</strain>
    </source>
</reference>
<sequence length="170" mass="18252">MADPSTLTHPDPEGGVRMMDASQKSDSARTAVAAGRVHLGEEAFRRVREHDIEKGDVLTTAQIAGIMGAKQTDKLIPLCHDATINGVEVDFTFNEDEQAIDVRAFTKSFGVTGVEMEALTAVSVASLTIYDMCKSVTKDIRIGDVHLRAKTGGQSGNWKSKSEDTSPAES</sequence>
<protein>
    <recommendedName>
        <fullName evidence="1">Cyclic pyranopterin monophosphate synthase</fullName>
        <ecNumber evidence="1">4.6.1.17</ecNumber>
    </recommendedName>
    <alternativeName>
        <fullName evidence="1">Molybdenum cofactor biosynthesis protein C</fullName>
    </alternativeName>
</protein>
<proteinExistence type="inferred from homology"/>
<gene>
    <name evidence="1" type="primary">moaC</name>
    <name type="ordered locus">SRU_1167</name>
</gene>
<evidence type="ECO:0000255" key="1">
    <source>
        <dbReference type="HAMAP-Rule" id="MF_01224"/>
    </source>
</evidence>
<evidence type="ECO:0000256" key="2">
    <source>
        <dbReference type="SAM" id="MobiDB-lite"/>
    </source>
</evidence>
<feature type="chain" id="PRO_1000066802" description="Cyclic pyranopterin monophosphate synthase">
    <location>
        <begin position="1"/>
        <end position="170"/>
    </location>
</feature>
<feature type="region of interest" description="Disordered" evidence="2">
    <location>
        <begin position="1"/>
        <end position="25"/>
    </location>
</feature>
<feature type="active site" evidence="1">
    <location>
        <position position="131"/>
    </location>
</feature>
<feature type="binding site" evidence="1">
    <location>
        <begin position="78"/>
        <end position="80"/>
    </location>
    <ligand>
        <name>substrate</name>
    </ligand>
</feature>
<feature type="binding site" evidence="1">
    <location>
        <begin position="116"/>
        <end position="117"/>
    </location>
    <ligand>
        <name>substrate</name>
    </ligand>
</feature>
<keyword id="KW-0456">Lyase</keyword>
<keyword id="KW-0501">Molybdenum cofactor biosynthesis</keyword>
<keyword id="KW-1185">Reference proteome</keyword>
<organism>
    <name type="scientific">Salinibacter ruber (strain DSM 13855 / M31)</name>
    <dbReference type="NCBI Taxonomy" id="309807"/>
    <lineage>
        <taxon>Bacteria</taxon>
        <taxon>Pseudomonadati</taxon>
        <taxon>Rhodothermota</taxon>
        <taxon>Rhodothermia</taxon>
        <taxon>Rhodothermales</taxon>
        <taxon>Salinibacteraceae</taxon>
        <taxon>Salinibacter</taxon>
    </lineage>
</organism>
<comment type="function">
    <text evidence="1">Catalyzes the conversion of (8S)-3',8-cyclo-7,8-dihydroguanosine 5'-triphosphate to cyclic pyranopterin monophosphate (cPMP).</text>
</comment>
<comment type="catalytic activity">
    <reaction evidence="1">
        <text>(8S)-3',8-cyclo-7,8-dihydroguanosine 5'-triphosphate = cyclic pyranopterin phosphate + diphosphate</text>
        <dbReference type="Rhea" id="RHEA:49580"/>
        <dbReference type="ChEBI" id="CHEBI:33019"/>
        <dbReference type="ChEBI" id="CHEBI:59648"/>
        <dbReference type="ChEBI" id="CHEBI:131766"/>
        <dbReference type="EC" id="4.6.1.17"/>
    </reaction>
</comment>
<comment type="pathway">
    <text evidence="1">Cofactor biosynthesis; molybdopterin biosynthesis.</text>
</comment>
<comment type="subunit">
    <text evidence="1">Homohexamer; trimer of dimers.</text>
</comment>
<comment type="similarity">
    <text evidence="1">Belongs to the MoaC family.</text>
</comment>
<accession>Q2S3D8</accession>
<dbReference type="EC" id="4.6.1.17" evidence="1"/>
<dbReference type="EMBL" id="CP000159">
    <property type="protein sequence ID" value="ABC44694.1"/>
    <property type="molecule type" value="Genomic_DNA"/>
</dbReference>
<dbReference type="RefSeq" id="WP_011403921.1">
    <property type="nucleotide sequence ID" value="NC_007677.1"/>
</dbReference>
<dbReference type="RefSeq" id="YP_445293.1">
    <property type="nucleotide sequence ID" value="NC_007677.1"/>
</dbReference>
<dbReference type="SMR" id="Q2S3D8"/>
<dbReference type="STRING" id="309807.SRU_1167"/>
<dbReference type="EnsemblBacteria" id="ABC44694">
    <property type="protein sequence ID" value="ABC44694"/>
    <property type="gene ID" value="SRU_1167"/>
</dbReference>
<dbReference type="GeneID" id="83728075"/>
<dbReference type="KEGG" id="sru:SRU_1167"/>
<dbReference type="PATRIC" id="fig|309807.25.peg.1209"/>
<dbReference type="eggNOG" id="COG0315">
    <property type="taxonomic scope" value="Bacteria"/>
</dbReference>
<dbReference type="HOGENOM" id="CLU_074693_1_1_10"/>
<dbReference type="OrthoDB" id="9794429at2"/>
<dbReference type="UniPathway" id="UPA00344"/>
<dbReference type="Proteomes" id="UP000008674">
    <property type="component" value="Chromosome"/>
</dbReference>
<dbReference type="GO" id="GO:0061799">
    <property type="term" value="F:cyclic pyranopterin monophosphate synthase activity"/>
    <property type="evidence" value="ECO:0007669"/>
    <property type="project" value="UniProtKB-UniRule"/>
</dbReference>
<dbReference type="GO" id="GO:0006777">
    <property type="term" value="P:Mo-molybdopterin cofactor biosynthetic process"/>
    <property type="evidence" value="ECO:0007669"/>
    <property type="project" value="UniProtKB-UniRule"/>
</dbReference>
<dbReference type="CDD" id="cd01420">
    <property type="entry name" value="MoaC_PE"/>
    <property type="match status" value="1"/>
</dbReference>
<dbReference type="Gene3D" id="3.30.70.640">
    <property type="entry name" value="Molybdopterin cofactor biosynthesis C (MoaC) domain"/>
    <property type="match status" value="1"/>
</dbReference>
<dbReference type="HAMAP" id="MF_01224_B">
    <property type="entry name" value="MoaC_B"/>
    <property type="match status" value="1"/>
</dbReference>
<dbReference type="InterPro" id="IPR023045">
    <property type="entry name" value="MoaC"/>
</dbReference>
<dbReference type="InterPro" id="IPR047594">
    <property type="entry name" value="MoaC_bact/euk"/>
</dbReference>
<dbReference type="InterPro" id="IPR036522">
    <property type="entry name" value="MoaC_sf"/>
</dbReference>
<dbReference type="InterPro" id="IPR050105">
    <property type="entry name" value="MoCo_biosynth_MoaA/MoaC"/>
</dbReference>
<dbReference type="InterPro" id="IPR002820">
    <property type="entry name" value="Mopterin_CF_biosynth-C_dom"/>
</dbReference>
<dbReference type="NCBIfam" id="TIGR00581">
    <property type="entry name" value="moaC"/>
    <property type="match status" value="1"/>
</dbReference>
<dbReference type="NCBIfam" id="NF006870">
    <property type="entry name" value="PRK09364.1"/>
    <property type="match status" value="1"/>
</dbReference>
<dbReference type="PANTHER" id="PTHR22960">
    <property type="entry name" value="MOLYBDOPTERIN COFACTOR SYNTHESIS PROTEIN A"/>
    <property type="match status" value="1"/>
</dbReference>
<dbReference type="Pfam" id="PF01967">
    <property type="entry name" value="MoaC"/>
    <property type="match status" value="1"/>
</dbReference>
<dbReference type="SUPFAM" id="SSF55040">
    <property type="entry name" value="Molybdenum cofactor biosynthesis protein C, MoaC"/>
    <property type="match status" value="1"/>
</dbReference>